<gene>
    <name evidence="1" type="primary">asnS</name>
    <name type="ordered locus">SaurJH9_1513</name>
</gene>
<sequence length="430" mass="49128">MKTTIKQAKDHLNQDVTIGAWLTNKRSSGKIAFLQLRDGTGFMQGVVVKSEVDEEVFKLAKEIAQESSLYVTGTITEDNRSDLGYEMQVKSIEVISEAHDYPITPKNHGTEFLMDHRHLWLRSKKQHAVMKIRNEVIRATYEFFNKDGFTKVDPPILTASAPEGTSELFHTKYFDQDAFLSQSGQLYLEAAAMAHGKVFSFGPTFRAEKSKTRRHLIEFWMIEGEMAFTNHAESLEIQEQYVTHVVKSVLENCKLELKILERDTSKLEKVATPFPRISYDDAIEFLKAEGFDDIEWGEDFGAPHETAIANHYDLPVFITNYPTKIKPFYMQPNPENEETVLCADLIAPEGYGEIIGGSERVDDLELLEQRVKEHGLDEEAYSYYLDLRRYGSVPHCGFGLGLERTVAWISGVEHVRETAPFPRLLNRLYP</sequence>
<comment type="catalytic activity">
    <reaction evidence="1">
        <text>tRNA(Asn) + L-asparagine + ATP = L-asparaginyl-tRNA(Asn) + AMP + diphosphate + H(+)</text>
        <dbReference type="Rhea" id="RHEA:11180"/>
        <dbReference type="Rhea" id="RHEA-COMP:9659"/>
        <dbReference type="Rhea" id="RHEA-COMP:9674"/>
        <dbReference type="ChEBI" id="CHEBI:15378"/>
        <dbReference type="ChEBI" id="CHEBI:30616"/>
        <dbReference type="ChEBI" id="CHEBI:33019"/>
        <dbReference type="ChEBI" id="CHEBI:58048"/>
        <dbReference type="ChEBI" id="CHEBI:78442"/>
        <dbReference type="ChEBI" id="CHEBI:78515"/>
        <dbReference type="ChEBI" id="CHEBI:456215"/>
        <dbReference type="EC" id="6.1.1.22"/>
    </reaction>
</comment>
<comment type="subunit">
    <text evidence="1">Homodimer.</text>
</comment>
<comment type="subcellular location">
    <subcellularLocation>
        <location evidence="1">Cytoplasm</location>
    </subcellularLocation>
</comment>
<comment type="similarity">
    <text evidence="1">Belongs to the class-II aminoacyl-tRNA synthetase family.</text>
</comment>
<organism>
    <name type="scientific">Staphylococcus aureus (strain JH9)</name>
    <dbReference type="NCBI Taxonomy" id="359786"/>
    <lineage>
        <taxon>Bacteria</taxon>
        <taxon>Bacillati</taxon>
        <taxon>Bacillota</taxon>
        <taxon>Bacilli</taxon>
        <taxon>Bacillales</taxon>
        <taxon>Staphylococcaceae</taxon>
        <taxon>Staphylococcus</taxon>
    </lineage>
</organism>
<name>SYN_STAA9</name>
<reference key="1">
    <citation type="submission" date="2007-05" db="EMBL/GenBank/DDBJ databases">
        <title>Complete sequence of chromosome of Staphylococcus aureus subsp. aureus JH9.</title>
        <authorList>
            <consortium name="US DOE Joint Genome Institute"/>
            <person name="Copeland A."/>
            <person name="Lucas S."/>
            <person name="Lapidus A."/>
            <person name="Barry K."/>
            <person name="Detter J.C."/>
            <person name="Glavina del Rio T."/>
            <person name="Hammon N."/>
            <person name="Israni S."/>
            <person name="Pitluck S."/>
            <person name="Chain P."/>
            <person name="Malfatti S."/>
            <person name="Shin M."/>
            <person name="Vergez L."/>
            <person name="Schmutz J."/>
            <person name="Larimer F."/>
            <person name="Land M."/>
            <person name="Hauser L."/>
            <person name="Kyrpides N."/>
            <person name="Kim E."/>
            <person name="Tomasz A."/>
            <person name="Richardson P."/>
        </authorList>
    </citation>
    <scope>NUCLEOTIDE SEQUENCE [LARGE SCALE GENOMIC DNA]</scope>
    <source>
        <strain>JH9</strain>
    </source>
</reference>
<keyword id="KW-0030">Aminoacyl-tRNA synthetase</keyword>
<keyword id="KW-0067">ATP-binding</keyword>
<keyword id="KW-0963">Cytoplasm</keyword>
<keyword id="KW-0436">Ligase</keyword>
<keyword id="KW-0547">Nucleotide-binding</keyword>
<keyword id="KW-0648">Protein biosynthesis</keyword>
<accession>A5ISY4</accession>
<evidence type="ECO:0000255" key="1">
    <source>
        <dbReference type="HAMAP-Rule" id="MF_00534"/>
    </source>
</evidence>
<proteinExistence type="inferred from homology"/>
<feature type="chain" id="PRO_1000081859" description="Asparagine--tRNA ligase">
    <location>
        <begin position="1"/>
        <end position="430"/>
    </location>
</feature>
<dbReference type="EC" id="6.1.1.22" evidence="1"/>
<dbReference type="EMBL" id="CP000703">
    <property type="protein sequence ID" value="ABQ49307.1"/>
    <property type="molecule type" value="Genomic_DNA"/>
</dbReference>
<dbReference type="RefSeq" id="WP_000858779.1">
    <property type="nucleotide sequence ID" value="NC_009487.1"/>
</dbReference>
<dbReference type="SMR" id="A5ISY4"/>
<dbReference type="KEGG" id="saj:SaurJH9_1513"/>
<dbReference type="HOGENOM" id="CLU_004553_2_0_9"/>
<dbReference type="GO" id="GO:0005737">
    <property type="term" value="C:cytoplasm"/>
    <property type="evidence" value="ECO:0007669"/>
    <property type="project" value="UniProtKB-SubCell"/>
</dbReference>
<dbReference type="GO" id="GO:0004816">
    <property type="term" value="F:asparagine-tRNA ligase activity"/>
    <property type="evidence" value="ECO:0007669"/>
    <property type="project" value="UniProtKB-UniRule"/>
</dbReference>
<dbReference type="GO" id="GO:0005524">
    <property type="term" value="F:ATP binding"/>
    <property type="evidence" value="ECO:0007669"/>
    <property type="project" value="UniProtKB-UniRule"/>
</dbReference>
<dbReference type="GO" id="GO:0140096">
    <property type="term" value="F:catalytic activity, acting on a protein"/>
    <property type="evidence" value="ECO:0007669"/>
    <property type="project" value="UniProtKB-ARBA"/>
</dbReference>
<dbReference type="GO" id="GO:0003676">
    <property type="term" value="F:nucleic acid binding"/>
    <property type="evidence" value="ECO:0007669"/>
    <property type="project" value="InterPro"/>
</dbReference>
<dbReference type="GO" id="GO:0016740">
    <property type="term" value="F:transferase activity"/>
    <property type="evidence" value="ECO:0007669"/>
    <property type="project" value="UniProtKB-ARBA"/>
</dbReference>
<dbReference type="GO" id="GO:0006421">
    <property type="term" value="P:asparaginyl-tRNA aminoacylation"/>
    <property type="evidence" value="ECO:0007669"/>
    <property type="project" value="UniProtKB-UniRule"/>
</dbReference>
<dbReference type="CDD" id="cd04323">
    <property type="entry name" value="AsnRS_cyto_like_N"/>
    <property type="match status" value="1"/>
</dbReference>
<dbReference type="CDD" id="cd00776">
    <property type="entry name" value="AsxRS_core"/>
    <property type="match status" value="1"/>
</dbReference>
<dbReference type="Gene3D" id="3.30.930.10">
    <property type="entry name" value="Bira Bifunctional Protein, Domain 2"/>
    <property type="match status" value="1"/>
</dbReference>
<dbReference type="Gene3D" id="2.40.50.140">
    <property type="entry name" value="Nucleic acid-binding proteins"/>
    <property type="match status" value="1"/>
</dbReference>
<dbReference type="HAMAP" id="MF_00534">
    <property type="entry name" value="Asn_tRNA_synth"/>
    <property type="match status" value="1"/>
</dbReference>
<dbReference type="InterPro" id="IPR004364">
    <property type="entry name" value="Aa-tRNA-synt_II"/>
</dbReference>
<dbReference type="InterPro" id="IPR006195">
    <property type="entry name" value="aa-tRNA-synth_II"/>
</dbReference>
<dbReference type="InterPro" id="IPR045864">
    <property type="entry name" value="aa-tRNA-synth_II/BPL/LPL"/>
</dbReference>
<dbReference type="InterPro" id="IPR004522">
    <property type="entry name" value="Asn-tRNA-ligase"/>
</dbReference>
<dbReference type="InterPro" id="IPR002312">
    <property type="entry name" value="Asp/Asn-tRNA-synth_IIb"/>
</dbReference>
<dbReference type="InterPro" id="IPR012340">
    <property type="entry name" value="NA-bd_OB-fold"/>
</dbReference>
<dbReference type="InterPro" id="IPR004365">
    <property type="entry name" value="NA-bd_OB_tRNA"/>
</dbReference>
<dbReference type="NCBIfam" id="TIGR00457">
    <property type="entry name" value="asnS"/>
    <property type="match status" value="1"/>
</dbReference>
<dbReference type="NCBIfam" id="NF003037">
    <property type="entry name" value="PRK03932.1"/>
    <property type="match status" value="1"/>
</dbReference>
<dbReference type="NCBIfam" id="NF003483">
    <property type="entry name" value="PRK05159.1"/>
    <property type="match status" value="1"/>
</dbReference>
<dbReference type="PANTHER" id="PTHR22594:SF34">
    <property type="entry name" value="ASPARAGINE--TRNA LIGASE, MITOCHONDRIAL-RELATED"/>
    <property type="match status" value="1"/>
</dbReference>
<dbReference type="PANTHER" id="PTHR22594">
    <property type="entry name" value="ASPARTYL/LYSYL-TRNA SYNTHETASE"/>
    <property type="match status" value="1"/>
</dbReference>
<dbReference type="Pfam" id="PF00152">
    <property type="entry name" value="tRNA-synt_2"/>
    <property type="match status" value="1"/>
</dbReference>
<dbReference type="Pfam" id="PF01336">
    <property type="entry name" value="tRNA_anti-codon"/>
    <property type="match status" value="1"/>
</dbReference>
<dbReference type="PRINTS" id="PR01042">
    <property type="entry name" value="TRNASYNTHASP"/>
</dbReference>
<dbReference type="SUPFAM" id="SSF55681">
    <property type="entry name" value="Class II aaRS and biotin synthetases"/>
    <property type="match status" value="1"/>
</dbReference>
<dbReference type="SUPFAM" id="SSF50249">
    <property type="entry name" value="Nucleic acid-binding proteins"/>
    <property type="match status" value="1"/>
</dbReference>
<dbReference type="PROSITE" id="PS50862">
    <property type="entry name" value="AA_TRNA_LIGASE_II"/>
    <property type="match status" value="1"/>
</dbReference>
<protein>
    <recommendedName>
        <fullName evidence="1">Asparagine--tRNA ligase</fullName>
        <ecNumber evidence="1">6.1.1.22</ecNumber>
    </recommendedName>
    <alternativeName>
        <fullName evidence="1">Asparaginyl-tRNA synthetase</fullName>
        <shortName evidence="1">AsnRS</shortName>
    </alternativeName>
</protein>